<sequence length="308" mass="35964">MAHMKTRLVYASILMMGALCLYFSMDSFRELPFVFKKSHGKFLQIPDIDCKQKPPFLVLLVTSSHKQLAARMAIRKTWGRETSVQGQQVRTFFLLGTSDSTEEMDATTLESEQHRDIIQKDFKDAYFNLTLKTMMGMEWVYHFCPQTAYVMKTDSDMFVNVGYLTELLLKKNKTTRFFTGYIKPHDFPIRQKFNKWFVSKFEYPWDRYPPFCSGTGYVFSSDVAIQVYNVSESVPFIKLEDVFVGLCLAKLKIRPEELHTKQTFFPGGLRFSVCRFQKIVACHFMKPQDLLTYWQALENSKEQDCPAV</sequence>
<keyword id="KW-0325">Glycoprotein</keyword>
<keyword id="KW-0328">Glycosyltransferase</keyword>
<keyword id="KW-0333">Golgi apparatus</keyword>
<keyword id="KW-0443">Lipid metabolism</keyword>
<keyword id="KW-0472">Membrane</keyword>
<keyword id="KW-1185">Reference proteome</keyword>
<keyword id="KW-0735">Signal-anchor</keyword>
<keyword id="KW-0808">Transferase</keyword>
<keyword id="KW-0812">Transmembrane</keyword>
<keyword id="KW-1133">Transmembrane helix</keyword>
<gene>
    <name evidence="4" type="primary">B3galt5</name>
    <name type="synonym">B3gt5</name>
</gene>
<protein>
    <recommendedName>
        <fullName evidence="3">Beta-1,3-galactosyltransferase 5</fullName>
        <shortName>Beta-1,3-GalTase 5</shortName>
        <shortName>Beta3Gal-T5</shortName>
        <shortName>Beta3GalT5</shortName>
        <shortName>b3Gal-T5</shortName>
        <ecNumber>2.4.1.-</ecNumber>
    </recommendedName>
    <alternativeName>
        <fullName>Beta-3-Gx-T5</fullName>
    </alternativeName>
    <alternativeName>
        <fullName>Stage-specific embryonic antigen 3 synthase</fullName>
        <shortName>SSEA-3 synthase</shortName>
    </alternativeName>
    <alternativeName>
        <fullName>UDP-Gal:beta-GlcNAc beta-1,3-galactosyltransferase 5</fullName>
    </alternativeName>
    <alternativeName>
        <fullName>UDP-galactose:beta-N-acetylglucosamine beta-1,3-galactosyltransferase 5</fullName>
    </alternativeName>
</protein>
<feature type="chain" id="PRO_0000219165" description="Beta-1,3-galactosyltransferase 5">
    <location>
        <begin position="1"/>
        <end position="308"/>
    </location>
</feature>
<feature type="topological domain" description="Cytoplasmic" evidence="2">
    <location>
        <begin position="1"/>
        <end position="7"/>
    </location>
</feature>
<feature type="transmembrane region" description="Helical; Signal-anchor for type II membrane protein" evidence="2">
    <location>
        <begin position="8"/>
        <end position="25"/>
    </location>
</feature>
<feature type="topological domain" description="Lumenal" evidence="2">
    <location>
        <begin position="26"/>
        <end position="308"/>
    </location>
</feature>
<feature type="glycosylation site" description="N-linked (GlcNAc...) asparagine" evidence="2">
    <location>
        <position position="128"/>
    </location>
</feature>
<feature type="glycosylation site" description="N-linked (GlcNAc...) asparagine" evidence="2">
    <location>
        <position position="172"/>
    </location>
</feature>
<feature type="glycosylation site" description="N-linked (GlcNAc...) asparagine" evidence="2">
    <location>
        <position position="229"/>
    </location>
</feature>
<reference key="1">
    <citation type="journal article" date="2000" name="J. Biol. Chem.">
        <title>The beta1,3-galactosyltransferase beta3GalT-V is a stage-specific embryonic antigen-3 (SSEA-3) synthase.</title>
        <authorList>
            <person name="Zhou D."/>
            <person name="Henion T.R."/>
            <person name="Jungalwala F.B."/>
            <person name="Berger E.G."/>
            <person name="Hennet T."/>
        </authorList>
    </citation>
    <scope>NUCLEOTIDE SEQUENCE [GENOMIC DNA]</scope>
    <source>
        <strain>129/SvJ</strain>
    </source>
</reference>
<reference key="2">
    <citation type="journal article" date="2004" name="Genome Res.">
        <title>The status, quality, and expansion of the NIH full-length cDNA project: the Mammalian Gene Collection (MGC).</title>
        <authorList>
            <consortium name="The MGC Project Team"/>
        </authorList>
    </citation>
    <scope>NUCLEOTIDE SEQUENCE [LARGE SCALE MRNA]</scope>
    <source>
        <strain>FVB/N</strain>
        <tissue>Colon</tissue>
    </source>
</reference>
<name>B3GT5_MOUSE</name>
<accession>Q9JI67</accession>
<dbReference type="EC" id="2.4.1.-"/>
<dbReference type="EMBL" id="AF254738">
    <property type="protein sequence ID" value="AAF86241.1"/>
    <property type="molecule type" value="Genomic_DNA"/>
</dbReference>
<dbReference type="EMBL" id="BC057887">
    <property type="protein sequence ID" value="AAH57887.1"/>
    <property type="molecule type" value="mRNA"/>
</dbReference>
<dbReference type="CCDS" id="CCDS28356.1"/>
<dbReference type="RefSeq" id="NP_001116465.1">
    <property type="nucleotide sequence ID" value="NM_001122993.1"/>
</dbReference>
<dbReference type="RefSeq" id="NP_001345318.1">
    <property type="nucleotide sequence ID" value="NM_001358389.1"/>
</dbReference>
<dbReference type="RefSeq" id="NP_001345319.1">
    <property type="nucleotide sequence ID" value="NM_001358390.1"/>
</dbReference>
<dbReference type="RefSeq" id="NP_149161.1">
    <property type="nucleotide sequence ID" value="NM_033149.3"/>
</dbReference>
<dbReference type="RefSeq" id="XP_006523179.1">
    <property type="nucleotide sequence ID" value="XM_006523116.3"/>
</dbReference>
<dbReference type="RefSeq" id="XP_006523180.1">
    <property type="nucleotide sequence ID" value="XM_006523117.2"/>
</dbReference>
<dbReference type="RefSeq" id="XP_017172660.1">
    <property type="nucleotide sequence ID" value="XM_017317171.1"/>
</dbReference>
<dbReference type="RefSeq" id="XP_036016084.1">
    <property type="nucleotide sequence ID" value="XM_036160191.1"/>
</dbReference>
<dbReference type="RefSeq" id="XP_036016085.1">
    <property type="nucleotide sequence ID" value="XM_036160192.1"/>
</dbReference>
<dbReference type="RefSeq" id="XP_036016086.1">
    <property type="nucleotide sequence ID" value="XM_036160193.1"/>
</dbReference>
<dbReference type="SMR" id="Q9JI67"/>
<dbReference type="FunCoup" id="Q9JI67">
    <property type="interactions" value="144"/>
</dbReference>
<dbReference type="STRING" id="10090.ENSMUSP00000109431"/>
<dbReference type="CAZy" id="GT31">
    <property type="family name" value="Glycosyltransferase Family 31"/>
</dbReference>
<dbReference type="GlyCosmos" id="Q9JI67">
    <property type="glycosylation" value="3 sites, No reported glycans"/>
</dbReference>
<dbReference type="GlyGen" id="Q9JI67">
    <property type="glycosylation" value="3 sites, 1 N-linked glycan (1 site)"/>
</dbReference>
<dbReference type="PhosphoSitePlus" id="Q9JI67"/>
<dbReference type="PaxDb" id="10090-ENSMUSP00000109431"/>
<dbReference type="ProteomicsDB" id="277153"/>
<dbReference type="Antibodypedia" id="23457">
    <property type="antibodies" value="107 antibodies from 23 providers"/>
</dbReference>
<dbReference type="DNASU" id="93961"/>
<dbReference type="Ensembl" id="ENSMUST00000099497.4">
    <property type="protein sequence ID" value="ENSMUSP00000097096.4"/>
    <property type="gene ID" value="ENSMUSG00000074892.10"/>
</dbReference>
<dbReference type="Ensembl" id="ENSMUST00000113800.9">
    <property type="protein sequence ID" value="ENSMUSP00000109431.3"/>
    <property type="gene ID" value="ENSMUSG00000074892.10"/>
</dbReference>
<dbReference type="GeneID" id="93961"/>
<dbReference type="KEGG" id="mmu:93961"/>
<dbReference type="UCSC" id="uc008acv.2">
    <property type="organism name" value="mouse"/>
</dbReference>
<dbReference type="AGR" id="MGI:2136878"/>
<dbReference type="CTD" id="10317"/>
<dbReference type="MGI" id="MGI:2136878">
    <property type="gene designation" value="B3galt5"/>
</dbReference>
<dbReference type="VEuPathDB" id="HostDB:ENSMUSG00000074892"/>
<dbReference type="eggNOG" id="KOG2287">
    <property type="taxonomic scope" value="Eukaryota"/>
</dbReference>
<dbReference type="GeneTree" id="ENSGT00940000160964"/>
<dbReference type="HOGENOM" id="CLU_036849_2_4_1"/>
<dbReference type="InParanoid" id="Q9JI67"/>
<dbReference type="OMA" id="HSQQTFF"/>
<dbReference type="OrthoDB" id="2139606at2759"/>
<dbReference type="PhylomeDB" id="Q9JI67"/>
<dbReference type="TreeFam" id="TF318639"/>
<dbReference type="Reactome" id="R-MMU-9037629">
    <property type="pathway name" value="Lewis blood group biosynthesis"/>
</dbReference>
<dbReference type="UniPathway" id="UPA00378"/>
<dbReference type="BioGRID-ORCS" id="93961">
    <property type="hits" value="3 hits in 79 CRISPR screens"/>
</dbReference>
<dbReference type="ChiTaRS" id="B3galt5">
    <property type="organism name" value="mouse"/>
</dbReference>
<dbReference type="PRO" id="PR:Q9JI67"/>
<dbReference type="Proteomes" id="UP000000589">
    <property type="component" value="Chromosome 16"/>
</dbReference>
<dbReference type="RNAct" id="Q9JI67">
    <property type="molecule type" value="protein"/>
</dbReference>
<dbReference type="Bgee" id="ENSMUSG00000074892">
    <property type="expression patterns" value="Expressed in left colon and 117 other cell types or tissues"/>
</dbReference>
<dbReference type="GO" id="GO:0000139">
    <property type="term" value="C:Golgi membrane"/>
    <property type="evidence" value="ECO:0007669"/>
    <property type="project" value="UniProtKB-SubCell"/>
</dbReference>
<dbReference type="GO" id="GO:0016758">
    <property type="term" value="F:hexosyltransferase activity"/>
    <property type="evidence" value="ECO:0007669"/>
    <property type="project" value="InterPro"/>
</dbReference>
<dbReference type="GO" id="GO:0006629">
    <property type="term" value="P:lipid metabolic process"/>
    <property type="evidence" value="ECO:0007669"/>
    <property type="project" value="UniProtKB-KW"/>
</dbReference>
<dbReference type="GO" id="GO:0006486">
    <property type="term" value="P:protein glycosylation"/>
    <property type="evidence" value="ECO:0007669"/>
    <property type="project" value="UniProtKB-UniPathway"/>
</dbReference>
<dbReference type="GO" id="GO:0009617">
    <property type="term" value="P:response to bacterium"/>
    <property type="evidence" value="ECO:0000270"/>
    <property type="project" value="MGI"/>
</dbReference>
<dbReference type="FunFam" id="3.90.550.50:FF:000001">
    <property type="entry name" value="Hexosyltransferase"/>
    <property type="match status" value="1"/>
</dbReference>
<dbReference type="Gene3D" id="3.90.550.50">
    <property type="match status" value="1"/>
</dbReference>
<dbReference type="InterPro" id="IPR002659">
    <property type="entry name" value="Glyco_trans_31"/>
</dbReference>
<dbReference type="InterPro" id="IPR029044">
    <property type="entry name" value="Nucleotide-diphossugar_trans"/>
</dbReference>
<dbReference type="PANTHER" id="PTHR11214:SF265">
    <property type="entry name" value="BETA-1,3-GALACTOSYLTRANSFERASE 5"/>
    <property type="match status" value="1"/>
</dbReference>
<dbReference type="PANTHER" id="PTHR11214">
    <property type="entry name" value="BETA-1,3-N-ACETYLGLUCOSAMINYLTRANSFERASE"/>
    <property type="match status" value="1"/>
</dbReference>
<dbReference type="Pfam" id="PF01762">
    <property type="entry name" value="Galactosyl_T"/>
    <property type="match status" value="1"/>
</dbReference>
<dbReference type="SUPFAM" id="SSF53448">
    <property type="entry name" value="Nucleotide-diphospho-sugar transferases"/>
    <property type="match status" value="1"/>
</dbReference>
<proteinExistence type="evidence at transcript level"/>
<comment type="function">
    <text>Catalyzes the transfer of Gal to GlcNAc-based acceptors with a preference for the core3 O-linked glycan GlcNAc(beta1,3)GalNAc structure. Can use glycolipid LC3Cer as an efficient acceptor. Also catalyzes the transfer of Gal to the terminal GalNAc unit of the globoside GB4, thereby synthesizing the glycolipid GB5, also known as the stage-specific embryonic antigen-3 (SSEA-3).</text>
</comment>
<comment type="catalytic activity">
    <reaction evidence="1">
        <text>a globoside Gb4Cer (d18:1(4E)) + UDP-alpha-D-galactose = a globoside GalGb4Cer (d18:1(4E)) + UDP + H(+)</text>
        <dbReference type="Rhea" id="RHEA:41996"/>
        <dbReference type="ChEBI" id="CHEBI:15378"/>
        <dbReference type="ChEBI" id="CHEBI:18259"/>
        <dbReference type="ChEBI" id="CHEBI:58223"/>
        <dbReference type="ChEBI" id="CHEBI:62571"/>
        <dbReference type="ChEBI" id="CHEBI:66914"/>
    </reaction>
    <physiologicalReaction direction="left-to-right" evidence="1">
        <dbReference type="Rhea" id="RHEA:41997"/>
    </physiologicalReaction>
</comment>
<comment type="pathway">
    <text>Protein modification; protein glycosylation.</text>
</comment>
<comment type="subcellular location">
    <subcellularLocation>
        <location evidence="3">Golgi apparatus membrane</location>
        <topology evidence="3">Single-pass type II membrane protein</topology>
    </subcellularLocation>
</comment>
<comment type="tissue specificity">
    <text>Expressed in brain and kidney.</text>
</comment>
<comment type="similarity">
    <text evidence="3">Belongs to the glycosyltransferase 31 family.</text>
</comment>
<comment type="online information" name="Functional Glycomics Gateway - GTase">
    <link uri="http://www.functionalglycomics.org/glycomics/molecule/jsp/glycoEnzyme/viewGlycoEnzyme.jsp?gbpId=gt_mou_458"/>
    <text>b3GalT5</text>
</comment>
<evidence type="ECO:0000250" key="1">
    <source>
        <dbReference type="UniProtKB" id="Q9Y2C3"/>
    </source>
</evidence>
<evidence type="ECO:0000255" key="2"/>
<evidence type="ECO:0000305" key="3"/>
<evidence type="ECO:0000312" key="4">
    <source>
        <dbReference type="MGI" id="MGI:2136878"/>
    </source>
</evidence>
<organism>
    <name type="scientific">Mus musculus</name>
    <name type="common">Mouse</name>
    <dbReference type="NCBI Taxonomy" id="10090"/>
    <lineage>
        <taxon>Eukaryota</taxon>
        <taxon>Metazoa</taxon>
        <taxon>Chordata</taxon>
        <taxon>Craniata</taxon>
        <taxon>Vertebrata</taxon>
        <taxon>Euteleostomi</taxon>
        <taxon>Mammalia</taxon>
        <taxon>Eutheria</taxon>
        <taxon>Euarchontoglires</taxon>
        <taxon>Glires</taxon>
        <taxon>Rodentia</taxon>
        <taxon>Myomorpha</taxon>
        <taxon>Muroidea</taxon>
        <taxon>Muridae</taxon>
        <taxon>Murinae</taxon>
        <taxon>Mus</taxon>
        <taxon>Mus</taxon>
    </lineage>
</organism>